<accession>Q652K1</accession>
<accession>A0A0P0XPI7</accession>
<accession>A3C0X0</accession>
<gene>
    <name type="primary">SGR</name>
    <name type="ordered locus">Os09g0532000</name>
    <name type="ordered locus">LOC_Os09g36200</name>
    <name type="ORF">OJ1254_E07.23</name>
    <name type="ORF">P0515E01.8</name>
</gene>
<reference key="1">
    <citation type="journal article" date="2007" name="Plant Cell">
        <title>The senescence-induced staygreen protein regulates chlorophyll degradation.</title>
        <authorList>
            <person name="Park S.Y."/>
            <person name="Yu J.W."/>
            <person name="Park J.S."/>
            <person name="Li J."/>
            <person name="Yoo S.C."/>
            <person name="Lee N.Y."/>
            <person name="Lee S.K."/>
            <person name="Jeong S.W."/>
            <person name="Seo H.S."/>
            <person name="Koh H.J."/>
            <person name="Jeon J.S."/>
            <person name="Park Y.I."/>
            <person name="Paek N.C."/>
        </authorList>
    </citation>
    <scope>NUCLEOTIDE SEQUENCE [MRNA]</scope>
    <scope>FUNCTION</scope>
    <scope>MUTAGENESIS OF VAL-99</scope>
    <scope>INDUCTION BY 6-BENZYLADENINE</scope>
    <scope>DEVELOPMENTAL STAGE</scope>
    <scope>SUBCELLULAR LOCATION</scope>
    <scope>INTERACTION WITH LHCPII COMPLEX</scope>
    <source>
        <strain>cv. Hwacheong</strain>
    </source>
</reference>
<reference key="2">
    <citation type="journal article" date="2005" name="Nature">
        <title>The map-based sequence of the rice genome.</title>
        <authorList>
            <consortium name="International rice genome sequencing project (IRGSP)"/>
        </authorList>
    </citation>
    <scope>NUCLEOTIDE SEQUENCE [LARGE SCALE GENOMIC DNA]</scope>
    <source>
        <strain>cv. Nipponbare</strain>
    </source>
</reference>
<reference key="3">
    <citation type="journal article" date="2008" name="Nucleic Acids Res.">
        <title>The rice annotation project database (RAP-DB): 2008 update.</title>
        <authorList>
            <consortium name="The rice annotation project (RAP)"/>
        </authorList>
    </citation>
    <scope>GENOME REANNOTATION</scope>
    <source>
        <strain>cv. Nipponbare</strain>
    </source>
</reference>
<reference key="4">
    <citation type="journal article" date="2013" name="Rice">
        <title>Improvement of the Oryza sativa Nipponbare reference genome using next generation sequence and optical map data.</title>
        <authorList>
            <person name="Kawahara Y."/>
            <person name="de la Bastide M."/>
            <person name="Hamilton J.P."/>
            <person name="Kanamori H."/>
            <person name="McCombie W.R."/>
            <person name="Ouyang S."/>
            <person name="Schwartz D.C."/>
            <person name="Tanaka T."/>
            <person name="Wu J."/>
            <person name="Zhou S."/>
            <person name="Childs K.L."/>
            <person name="Davidson R.M."/>
            <person name="Lin H."/>
            <person name="Quesada-Ocampo L."/>
            <person name="Vaillancourt B."/>
            <person name="Sakai H."/>
            <person name="Lee S.S."/>
            <person name="Kim J."/>
            <person name="Numa H."/>
            <person name="Itoh T."/>
            <person name="Buell C.R."/>
            <person name="Matsumoto T."/>
        </authorList>
    </citation>
    <scope>GENOME REANNOTATION</scope>
    <source>
        <strain>cv. Nipponbare</strain>
    </source>
</reference>
<reference key="5">
    <citation type="journal article" date="2005" name="PLoS Biol.">
        <title>The genomes of Oryza sativa: a history of duplications.</title>
        <authorList>
            <person name="Yu J."/>
            <person name="Wang J."/>
            <person name="Lin W."/>
            <person name="Li S."/>
            <person name="Li H."/>
            <person name="Zhou J."/>
            <person name="Ni P."/>
            <person name="Dong W."/>
            <person name="Hu S."/>
            <person name="Zeng C."/>
            <person name="Zhang J."/>
            <person name="Zhang Y."/>
            <person name="Li R."/>
            <person name="Xu Z."/>
            <person name="Li S."/>
            <person name="Li X."/>
            <person name="Zheng H."/>
            <person name="Cong L."/>
            <person name="Lin L."/>
            <person name="Yin J."/>
            <person name="Geng J."/>
            <person name="Li G."/>
            <person name="Shi J."/>
            <person name="Liu J."/>
            <person name="Lv H."/>
            <person name="Li J."/>
            <person name="Wang J."/>
            <person name="Deng Y."/>
            <person name="Ran L."/>
            <person name="Shi X."/>
            <person name="Wang X."/>
            <person name="Wu Q."/>
            <person name="Li C."/>
            <person name="Ren X."/>
            <person name="Wang J."/>
            <person name="Wang X."/>
            <person name="Li D."/>
            <person name="Liu D."/>
            <person name="Zhang X."/>
            <person name="Ji Z."/>
            <person name="Zhao W."/>
            <person name="Sun Y."/>
            <person name="Zhang Z."/>
            <person name="Bao J."/>
            <person name="Han Y."/>
            <person name="Dong L."/>
            <person name="Ji J."/>
            <person name="Chen P."/>
            <person name="Wu S."/>
            <person name="Liu J."/>
            <person name="Xiao Y."/>
            <person name="Bu D."/>
            <person name="Tan J."/>
            <person name="Yang L."/>
            <person name="Ye C."/>
            <person name="Zhang J."/>
            <person name="Xu J."/>
            <person name="Zhou Y."/>
            <person name="Yu Y."/>
            <person name="Zhang B."/>
            <person name="Zhuang S."/>
            <person name="Wei H."/>
            <person name="Liu B."/>
            <person name="Lei M."/>
            <person name="Yu H."/>
            <person name="Li Y."/>
            <person name="Xu H."/>
            <person name="Wei S."/>
            <person name="He X."/>
            <person name="Fang L."/>
            <person name="Zhang Z."/>
            <person name="Zhang Y."/>
            <person name="Huang X."/>
            <person name="Su Z."/>
            <person name="Tong W."/>
            <person name="Li J."/>
            <person name="Tong Z."/>
            <person name="Li S."/>
            <person name="Ye J."/>
            <person name="Wang L."/>
            <person name="Fang L."/>
            <person name="Lei T."/>
            <person name="Chen C.-S."/>
            <person name="Chen H.-C."/>
            <person name="Xu Z."/>
            <person name="Li H."/>
            <person name="Huang H."/>
            <person name="Zhang F."/>
            <person name="Xu H."/>
            <person name="Li N."/>
            <person name="Zhao C."/>
            <person name="Li S."/>
            <person name="Dong L."/>
            <person name="Huang Y."/>
            <person name="Li L."/>
            <person name="Xi Y."/>
            <person name="Qi Q."/>
            <person name="Li W."/>
            <person name="Zhang B."/>
            <person name="Hu W."/>
            <person name="Zhang Y."/>
            <person name="Tian X."/>
            <person name="Jiao Y."/>
            <person name="Liang X."/>
            <person name="Jin J."/>
            <person name="Gao L."/>
            <person name="Zheng W."/>
            <person name="Hao B."/>
            <person name="Liu S.-M."/>
            <person name="Wang W."/>
            <person name="Yuan L."/>
            <person name="Cao M."/>
            <person name="McDermott J."/>
            <person name="Samudrala R."/>
            <person name="Wang J."/>
            <person name="Wong G.K.-S."/>
            <person name="Yang H."/>
        </authorList>
    </citation>
    <scope>NUCLEOTIDE SEQUENCE [LARGE SCALE GENOMIC DNA]</scope>
    <source>
        <strain>cv. Nipponbare</strain>
    </source>
</reference>
<reference key="6">
    <citation type="journal article" date="2003" name="Science">
        <title>Collection, mapping, and annotation of over 28,000 cDNA clones from japonica rice.</title>
        <authorList>
            <consortium name="The rice full-length cDNA consortium"/>
        </authorList>
    </citation>
    <scope>NUCLEOTIDE SEQUENCE [LARGE SCALE MRNA]</scope>
    <source>
        <strain>cv. Nipponbare</strain>
    </source>
</reference>
<reference key="7">
    <citation type="journal article" date="2007" name="Plant J.">
        <title>Molecular cloning and function analysis of the stay green gene in rice.</title>
        <authorList>
            <person name="Jiang H."/>
            <person name="Li M."/>
            <person name="Liang N."/>
            <person name="Yan H."/>
            <person name="Wei Y."/>
            <person name="Xu X."/>
            <person name="Liu J."/>
            <person name="Xu Z."/>
            <person name="Chen F."/>
            <person name="Wu G."/>
        </authorList>
    </citation>
    <scope>FUNCTION</scope>
    <scope>MUTAGENESIS OF TYR-84</scope>
    <scope>SUBCELLULAR LOCATION</scope>
    <scope>TISSUE SPECIFICITY</scope>
    <scope>INDUCTION BY DARK-INDUCED SENESCENCE; ABSCISIC ACID AND 6-BENZYLADENINE</scope>
    <scope>DEVELOPMENTAL STAGE</scope>
</reference>
<reference key="8">
    <citation type="journal article" date="2007" name="Proc. Natl. Acad. Sci. U.S.A.">
        <title>Mendel's green cotyledon gene encodes a positive regulator of the chlorophyll-degrading pathway.</title>
        <authorList>
            <person name="Sato Y."/>
            <person name="Morita R."/>
            <person name="Nishimura M."/>
            <person name="Yamaguchi H."/>
            <person name="Kusaba M."/>
        </authorList>
    </citation>
    <scope>FUNCTION</scope>
    <scope>MUTAGENESIS OF ASN-194</scope>
    <scope>DISRUPTION PHENOTYPE</scope>
</reference>
<reference key="9">
    <citation type="journal article" date="2013" name="J. Plant Physiol.">
        <title>The Stay-Green Rice like (SGRL) gene regulates chlorophyll degradation in rice.</title>
        <authorList>
            <person name="Rong H."/>
            <person name="Tang Y."/>
            <person name="Zhang H."/>
            <person name="Wu P."/>
            <person name="Chen Y."/>
            <person name="Li M."/>
            <person name="Wu G."/>
            <person name="Jiang H."/>
        </authorList>
    </citation>
    <scope>DEVELOPMENTAL STAGE</scope>
    <scope>INDUCTION BY DARK-INDUCED SENESCENCE</scope>
</reference>
<dbReference type="EMBL" id="AY850134">
    <property type="protein sequence ID" value="AAW82954.1"/>
    <property type="molecule type" value="mRNA"/>
</dbReference>
<dbReference type="EMBL" id="AP005314">
    <property type="protein sequence ID" value="BAD46019.1"/>
    <property type="molecule type" value="Genomic_DNA"/>
</dbReference>
<dbReference type="EMBL" id="AP005567">
    <property type="protein sequence ID" value="BAD46266.1"/>
    <property type="molecule type" value="Genomic_DNA"/>
</dbReference>
<dbReference type="EMBL" id="AP008215">
    <property type="protein sequence ID" value="BAF25672.1"/>
    <property type="molecule type" value="Genomic_DNA"/>
</dbReference>
<dbReference type="EMBL" id="AP014965">
    <property type="protein sequence ID" value="BAT09110.1"/>
    <property type="molecule type" value="Genomic_DNA"/>
</dbReference>
<dbReference type="EMBL" id="CM000146">
    <property type="protein sequence ID" value="EAZ45459.1"/>
    <property type="status" value="ALT_SEQ"/>
    <property type="molecule type" value="Genomic_DNA"/>
</dbReference>
<dbReference type="EMBL" id="AK105810">
    <property type="protein sequence ID" value="BAG97378.1"/>
    <property type="molecule type" value="mRNA"/>
</dbReference>
<dbReference type="RefSeq" id="XP_015611682.1">
    <property type="nucleotide sequence ID" value="XM_015756196.1"/>
</dbReference>
<dbReference type="SMR" id="Q652K1"/>
<dbReference type="BioGRID" id="816709">
    <property type="interactions" value="2"/>
</dbReference>
<dbReference type="FunCoup" id="Q652K1">
    <property type="interactions" value="936"/>
</dbReference>
<dbReference type="STRING" id="39947.Q652K1"/>
<dbReference type="PaxDb" id="39947-Q652K1"/>
<dbReference type="EnsemblPlants" id="Os09t0532000-01">
    <property type="protein sequence ID" value="Os09t0532000-01"/>
    <property type="gene ID" value="Os09g0532000"/>
</dbReference>
<dbReference type="Gramene" id="Os09t0532000-01">
    <property type="protein sequence ID" value="Os09t0532000-01"/>
    <property type="gene ID" value="Os09g0532000"/>
</dbReference>
<dbReference type="KEGG" id="dosa:Os09g0532000"/>
<dbReference type="eggNOG" id="ENOG502QV01">
    <property type="taxonomic scope" value="Eukaryota"/>
</dbReference>
<dbReference type="HOGENOM" id="CLU_073517_0_0_1"/>
<dbReference type="InParanoid" id="Q652K1"/>
<dbReference type="OMA" id="VGEWPHR"/>
<dbReference type="OrthoDB" id="2012322at2759"/>
<dbReference type="Proteomes" id="UP000000763">
    <property type="component" value="Chromosome 9"/>
</dbReference>
<dbReference type="Proteomes" id="UP000007752">
    <property type="component" value="Chromosome 9"/>
</dbReference>
<dbReference type="Proteomes" id="UP000059680">
    <property type="component" value="Chromosome 9"/>
</dbReference>
<dbReference type="GO" id="GO:0031969">
    <property type="term" value="C:chloroplast membrane"/>
    <property type="evidence" value="ECO:0007669"/>
    <property type="project" value="UniProtKB-SubCell"/>
</dbReference>
<dbReference type="GO" id="GO:0009570">
    <property type="term" value="C:chloroplast stroma"/>
    <property type="evidence" value="ECO:0007669"/>
    <property type="project" value="UniProtKB-SubCell"/>
</dbReference>
<dbReference type="GO" id="GO:0015996">
    <property type="term" value="P:chlorophyll catabolic process"/>
    <property type="evidence" value="ECO:0000318"/>
    <property type="project" value="GO_Central"/>
</dbReference>
<dbReference type="InterPro" id="IPR024438">
    <property type="entry name" value="Staygreen"/>
</dbReference>
<dbReference type="InterPro" id="IPR010916">
    <property type="entry name" value="TonB_box_CS"/>
</dbReference>
<dbReference type="PANTHER" id="PTHR31750:SF4">
    <property type="entry name" value="LP06106P"/>
    <property type="match status" value="1"/>
</dbReference>
<dbReference type="PANTHER" id="PTHR31750">
    <property type="entry name" value="PROTEIN STAY-GREEN 1, CHLOROPLASTIC-RELATED"/>
    <property type="match status" value="1"/>
</dbReference>
<dbReference type="Pfam" id="PF12638">
    <property type="entry name" value="Staygreen"/>
    <property type="match status" value="1"/>
</dbReference>
<organism>
    <name type="scientific">Oryza sativa subsp. japonica</name>
    <name type="common">Rice</name>
    <dbReference type="NCBI Taxonomy" id="39947"/>
    <lineage>
        <taxon>Eukaryota</taxon>
        <taxon>Viridiplantae</taxon>
        <taxon>Streptophyta</taxon>
        <taxon>Embryophyta</taxon>
        <taxon>Tracheophyta</taxon>
        <taxon>Spermatophyta</taxon>
        <taxon>Magnoliopsida</taxon>
        <taxon>Liliopsida</taxon>
        <taxon>Poales</taxon>
        <taxon>Poaceae</taxon>
        <taxon>BOP clade</taxon>
        <taxon>Oryzoideae</taxon>
        <taxon>Oryzeae</taxon>
        <taxon>Oryzinae</taxon>
        <taxon>Oryza</taxon>
        <taxon>Oryza sativa</taxon>
    </lineage>
</organism>
<protein>
    <recommendedName>
        <fullName>Protein STAY-GREEN, chloroplastic</fullName>
    </recommendedName>
    <alternativeName>
        <fullName>Protein STAYGREEN</fullName>
    </alternativeName>
</protein>
<comment type="function">
    <text evidence="2 3 4">Involved in the disassembling mechanism of the intact light-harvesting complex of photosystem II (LHCII) in the thylakoid membranes. Required to trigger chlorophyll degradation during natural and dark-induced leaf senescence.</text>
</comment>
<comment type="subunit">
    <text evidence="2">Interacts with LHCII complex.</text>
</comment>
<comment type="subcellular location">
    <subcellularLocation>
        <location>Plastid</location>
        <location>Chloroplast membrane</location>
    </subcellularLocation>
    <subcellularLocation>
        <location>Plastid</location>
        <location>Chloroplast stroma</location>
    </subcellularLocation>
</comment>
<comment type="tissue specificity">
    <text evidence="4">Expressed in leaves, roots and developing seeds.</text>
</comment>
<comment type="developmental stage">
    <text evidence="2 4 5">Constitutively expressed at low level during leaf development, but up-regulated during senescence, when the leaf color changes from green to yellow.</text>
</comment>
<comment type="induction">
    <text evidence="2 4 5">Up-regulated by abscisic acid and dark-induced senescence. Down-regulated by 6-benzyladenine. Circadian-regulation with an increased expression during the day and a peak at noon.</text>
</comment>
<comment type="disruption phenotype">
    <text evidence="3">Stay-green phenotype during dark-induced senescence.</text>
</comment>
<comment type="similarity">
    <text evidence="6">Belongs to the staygreen family.</text>
</comment>
<comment type="sequence caution" evidence="6">
    <conflict type="erroneous gene model prediction">
        <sequence resource="EMBL-CDS" id="EAZ45459"/>
    </conflict>
</comment>
<name>SGR_ORYSJ</name>
<keyword id="KW-0150">Chloroplast</keyword>
<keyword id="KW-0472">Membrane</keyword>
<keyword id="KW-0934">Plastid</keyword>
<keyword id="KW-1185">Reference proteome</keyword>
<keyword id="KW-0809">Transit peptide</keyword>
<evidence type="ECO:0000255" key="1"/>
<evidence type="ECO:0000269" key="2">
    <source>
    </source>
</evidence>
<evidence type="ECO:0000269" key="3">
    <source>
    </source>
</evidence>
<evidence type="ECO:0000269" key="4">
    <source>
    </source>
</evidence>
<evidence type="ECO:0000269" key="5">
    <source>
    </source>
</evidence>
<evidence type="ECO:0000305" key="6"/>
<proteinExistence type="evidence at protein level"/>
<sequence>MAAATSTMSLLPPITQQQRWHAADSLVVLASRCHNSRRRRRCRYVVPRARLFGPAIFEASKLKVLFLGVDEEKHQHPGKLPRTYTLTHSDVTARLTLAVSHTINRAQLQGWYNKLQRDEVVAEWKKVQGHMSLHVHCHISGGHVLLDLIAGLRYYIFRKELPVVLKAFVHGDGNLFSRHPELEEATVWVYFHSNLPRFNRVECWGPLRDAGAPPEEDDAVAAAAAEEAAAEQMPAAGEWPRRCPGQCDCCFPPYSLIPWPHQHDVAAADGQPQQ</sequence>
<feature type="transit peptide" description="Chloroplast" evidence="1">
    <location>
        <begin position="1"/>
        <end position="48"/>
    </location>
</feature>
<feature type="chain" id="PRO_0000425236" description="Protein STAY-GREEN, chloroplastic">
    <location>
        <begin position="49"/>
        <end position="274"/>
    </location>
</feature>
<feature type="mutagenesis site" description="Loss of activity and stay-green phenotype." evidence="4">
    <original>Y</original>
    <variation>C</variation>
    <location>
        <position position="84"/>
    </location>
</feature>
<feature type="mutagenesis site" description="No effect on LHCPII binding, but decreased chlorophyll degradation and staygreen phenotype." evidence="2">
    <original>V</original>
    <variation>M</variation>
    <location>
        <position position="99"/>
    </location>
</feature>
<feature type="mutagenesis site" description="Loss of function." evidence="3">
    <original>N</original>
    <variation>NIL</variation>
    <location>
        <position position="194"/>
    </location>
</feature>